<proteinExistence type="inferred from homology"/>
<evidence type="ECO:0000255" key="1">
    <source>
        <dbReference type="HAMAP-Rule" id="MF_01326"/>
    </source>
</evidence>
<evidence type="ECO:0000305" key="2"/>
<name>RL24_CERSK</name>
<organism>
    <name type="scientific">Cereibacter sphaeroides (strain KD131 / KCTC 12085)</name>
    <name type="common">Rhodobacter sphaeroides</name>
    <dbReference type="NCBI Taxonomy" id="557760"/>
    <lineage>
        <taxon>Bacteria</taxon>
        <taxon>Pseudomonadati</taxon>
        <taxon>Pseudomonadota</taxon>
        <taxon>Alphaproteobacteria</taxon>
        <taxon>Rhodobacterales</taxon>
        <taxon>Paracoccaceae</taxon>
        <taxon>Cereibacter</taxon>
    </lineage>
</organism>
<accession>B9KLA2</accession>
<feature type="chain" id="PRO_1000165960" description="Large ribosomal subunit protein uL24">
    <location>
        <begin position="1"/>
        <end position="101"/>
    </location>
</feature>
<dbReference type="EMBL" id="CP001150">
    <property type="protein sequence ID" value="ACL99884.1"/>
    <property type="molecule type" value="Genomic_DNA"/>
</dbReference>
<dbReference type="RefSeq" id="WP_002722510.1">
    <property type="nucleotide sequence ID" value="NC_011963.1"/>
</dbReference>
<dbReference type="SMR" id="B9KLA2"/>
<dbReference type="GeneID" id="67445511"/>
<dbReference type="KEGG" id="rsk:RSKD131_0025"/>
<dbReference type="HOGENOM" id="CLU_093315_2_2_5"/>
<dbReference type="GO" id="GO:1990904">
    <property type="term" value="C:ribonucleoprotein complex"/>
    <property type="evidence" value="ECO:0007669"/>
    <property type="project" value="UniProtKB-KW"/>
</dbReference>
<dbReference type="GO" id="GO:0005840">
    <property type="term" value="C:ribosome"/>
    <property type="evidence" value="ECO:0007669"/>
    <property type="project" value="UniProtKB-KW"/>
</dbReference>
<dbReference type="GO" id="GO:0019843">
    <property type="term" value="F:rRNA binding"/>
    <property type="evidence" value="ECO:0007669"/>
    <property type="project" value="UniProtKB-UniRule"/>
</dbReference>
<dbReference type="GO" id="GO:0003735">
    <property type="term" value="F:structural constituent of ribosome"/>
    <property type="evidence" value="ECO:0007669"/>
    <property type="project" value="InterPro"/>
</dbReference>
<dbReference type="GO" id="GO:0006412">
    <property type="term" value="P:translation"/>
    <property type="evidence" value="ECO:0007669"/>
    <property type="project" value="UniProtKB-UniRule"/>
</dbReference>
<dbReference type="CDD" id="cd06089">
    <property type="entry name" value="KOW_RPL26"/>
    <property type="match status" value="1"/>
</dbReference>
<dbReference type="Gene3D" id="2.30.30.30">
    <property type="match status" value="1"/>
</dbReference>
<dbReference type="HAMAP" id="MF_01326_B">
    <property type="entry name" value="Ribosomal_uL24_B"/>
    <property type="match status" value="1"/>
</dbReference>
<dbReference type="InterPro" id="IPR005824">
    <property type="entry name" value="KOW"/>
</dbReference>
<dbReference type="InterPro" id="IPR014722">
    <property type="entry name" value="Rib_uL2_dom2"/>
</dbReference>
<dbReference type="InterPro" id="IPR003256">
    <property type="entry name" value="Ribosomal_uL24"/>
</dbReference>
<dbReference type="InterPro" id="IPR005825">
    <property type="entry name" value="Ribosomal_uL24_CS"/>
</dbReference>
<dbReference type="InterPro" id="IPR041988">
    <property type="entry name" value="Ribosomal_uL24_KOW"/>
</dbReference>
<dbReference type="InterPro" id="IPR008991">
    <property type="entry name" value="Translation_prot_SH3-like_sf"/>
</dbReference>
<dbReference type="NCBIfam" id="TIGR01079">
    <property type="entry name" value="rplX_bact"/>
    <property type="match status" value="1"/>
</dbReference>
<dbReference type="PANTHER" id="PTHR12903">
    <property type="entry name" value="MITOCHONDRIAL RIBOSOMAL PROTEIN L24"/>
    <property type="match status" value="1"/>
</dbReference>
<dbReference type="Pfam" id="PF00467">
    <property type="entry name" value="KOW"/>
    <property type="match status" value="1"/>
</dbReference>
<dbReference type="Pfam" id="PF17136">
    <property type="entry name" value="ribosomal_L24"/>
    <property type="match status" value="1"/>
</dbReference>
<dbReference type="SMART" id="SM00739">
    <property type="entry name" value="KOW"/>
    <property type="match status" value="1"/>
</dbReference>
<dbReference type="SUPFAM" id="SSF50104">
    <property type="entry name" value="Translation proteins SH3-like domain"/>
    <property type="match status" value="1"/>
</dbReference>
<dbReference type="PROSITE" id="PS01108">
    <property type="entry name" value="RIBOSOMAL_L24"/>
    <property type="match status" value="1"/>
</dbReference>
<protein>
    <recommendedName>
        <fullName evidence="1">Large ribosomal subunit protein uL24</fullName>
    </recommendedName>
    <alternativeName>
        <fullName evidence="2">50S ribosomal protein L24</fullName>
    </alternativeName>
</protein>
<gene>
    <name evidence="1" type="primary">rplX</name>
    <name type="ordered locus">RSKD131_0025</name>
</gene>
<comment type="function">
    <text evidence="1">One of two assembly initiator proteins, it binds directly to the 5'-end of the 23S rRNA, where it nucleates assembly of the 50S subunit.</text>
</comment>
<comment type="function">
    <text evidence="1">One of the proteins that surrounds the polypeptide exit tunnel on the outside of the subunit.</text>
</comment>
<comment type="subunit">
    <text evidence="1">Part of the 50S ribosomal subunit.</text>
</comment>
<comment type="similarity">
    <text evidence="1">Belongs to the universal ribosomal protein uL24 family.</text>
</comment>
<reference key="1">
    <citation type="journal article" date="2009" name="J. Bacteriol.">
        <title>Complete genome sequence of Rhodobacter sphaeroides KD131.</title>
        <authorList>
            <person name="Lim S.-K."/>
            <person name="Kim S.J."/>
            <person name="Cha S.H."/>
            <person name="Oh Y.-K."/>
            <person name="Rhee H.-J."/>
            <person name="Kim M.-S."/>
            <person name="Lee J.K."/>
        </authorList>
    </citation>
    <scope>NUCLEOTIDE SEQUENCE [LARGE SCALE GENOMIC DNA]</scope>
    <source>
        <strain>KD131 / KCTC 12085</strain>
    </source>
</reference>
<sequence length="101" mass="10759">MAAKLKKGDRVVVLAGKDKGKQGEITAVMPKDNKAVVEGVNVAIRHTKQTPTAQGGRLAKAMPIDLSNLALLDANGKATRVGFRFEGEKKVRYAKTTGDVI</sequence>
<keyword id="KW-0687">Ribonucleoprotein</keyword>
<keyword id="KW-0689">Ribosomal protein</keyword>
<keyword id="KW-0694">RNA-binding</keyword>
<keyword id="KW-0699">rRNA-binding</keyword>